<feature type="initiator methionine" description="Removed" evidence="1">
    <location>
        <position position="1"/>
    </location>
</feature>
<feature type="chain" id="PRO_0000182248" description="Arginine deiminase">
    <location>
        <begin position="2"/>
        <end position="411"/>
    </location>
</feature>
<feature type="active site" description="Amidino-cysteine intermediate" evidence="1">
    <location>
        <position position="401"/>
    </location>
</feature>
<organism>
    <name type="scientific">Streptococcus pyogenes serotype M1</name>
    <dbReference type="NCBI Taxonomy" id="301447"/>
    <lineage>
        <taxon>Bacteria</taxon>
        <taxon>Bacillati</taxon>
        <taxon>Bacillota</taxon>
        <taxon>Bacilli</taxon>
        <taxon>Lactobacillales</taxon>
        <taxon>Streptococcaceae</taxon>
        <taxon>Streptococcus</taxon>
    </lineage>
</organism>
<keyword id="KW-0056">Arginine metabolism</keyword>
<keyword id="KW-0963">Cytoplasm</keyword>
<keyword id="KW-0325">Glycoprotein</keyword>
<keyword id="KW-0378">Hydrolase</keyword>
<keyword id="KW-1185">Reference proteome</keyword>
<protein>
    <recommendedName>
        <fullName>Arginine deiminase</fullName>
        <shortName>ADI</shortName>
        <ecNumber>3.5.3.6</ecNumber>
    </recommendedName>
    <alternativeName>
        <fullName>Arginine dihydrolase</fullName>
        <shortName>AD</shortName>
    </alternativeName>
    <alternativeName>
        <fullName>Streptococcal acid glycoprotein</fullName>
    </alternativeName>
</protein>
<comment type="catalytic activity">
    <reaction>
        <text>L-arginine + H2O = L-citrulline + NH4(+)</text>
        <dbReference type="Rhea" id="RHEA:19597"/>
        <dbReference type="ChEBI" id="CHEBI:15377"/>
        <dbReference type="ChEBI" id="CHEBI:28938"/>
        <dbReference type="ChEBI" id="CHEBI:32682"/>
        <dbReference type="ChEBI" id="CHEBI:57743"/>
        <dbReference type="EC" id="3.5.3.6"/>
    </reaction>
</comment>
<comment type="pathway">
    <text>Amino-acid degradation; L-arginine degradation via ADI pathway; carbamoyl phosphate from L-arginine: step 1/2.</text>
</comment>
<comment type="subcellular location">
    <subcellularLocation>
        <location evidence="2">Cytoplasm</location>
    </subcellularLocation>
</comment>
<comment type="PTM">
    <text evidence="1">Glycosylated.</text>
</comment>
<comment type="similarity">
    <text evidence="2">Belongs to the arginine deiminase family.</text>
</comment>
<sequence>MTAQTPIHVYSEIGKLKKVLLHRPGKEIENLMPDYLERLLFDDIPFLEDAQKEHDAFAQALRDEGIEVLYLETLAAESLVTPEIREAFIDEYLSEANIRGRATKKAIRELLMAIEDNQELIEKTMAGVQKSELPEIPASEKGLTDLVESNYPFAIDPMPNLYFTRDPFATIGTGVSLNHMFSETRNRETLYGKYIFTHHPIYGGGKVPMVYDRNETTRIEGGDELVLSKDVLAVGISQRTDAASIEKLLVNIFKQNLGFKKVLAFEFANNRKFMHLDTVFTMVDYDKFTIHPEIEGDLRVYSVTYDNEELHIVEEKGDLAELLAANLGVEKVDLIRCGGDNLVAAGREQWNDGSNTLTIAPGVVVVYNRNTITNAILESKGLKLIKIHGSELVRGRGGPRCMSMPFEREDI</sequence>
<evidence type="ECO:0000250" key="1"/>
<evidence type="ECO:0000305" key="2"/>
<accession>P0C0B4</accession>
<accession>P16962</accession>
<accession>P68769</accession>
<accession>Q48XN2</accession>
<dbReference type="EC" id="3.5.3.6"/>
<dbReference type="EMBL" id="AE004092">
    <property type="protein sequence ID" value="AAK34339.1"/>
    <property type="molecule type" value="Genomic_DNA"/>
</dbReference>
<dbReference type="EMBL" id="CP000017">
    <property type="protein sequence ID" value="AAZ51893.1"/>
    <property type="molecule type" value="Genomic_DNA"/>
</dbReference>
<dbReference type="RefSeq" id="NP_269618.1">
    <property type="nucleotide sequence ID" value="NC_002737.2"/>
</dbReference>
<dbReference type="SMR" id="P0C0B4"/>
<dbReference type="PaxDb" id="1314-HKU360_01316"/>
<dbReference type="KEGG" id="spy:SPy_1547"/>
<dbReference type="KEGG" id="spz:M5005_Spy1275"/>
<dbReference type="PATRIC" id="fig|160490.10.peg.1352"/>
<dbReference type="HOGENOM" id="CLU_052662_0_1_9"/>
<dbReference type="OMA" id="CMSMPLI"/>
<dbReference type="UniPathway" id="UPA00254">
    <property type="reaction ID" value="UER00364"/>
</dbReference>
<dbReference type="Proteomes" id="UP000000750">
    <property type="component" value="Chromosome"/>
</dbReference>
<dbReference type="GO" id="GO:0005737">
    <property type="term" value="C:cytoplasm"/>
    <property type="evidence" value="ECO:0007669"/>
    <property type="project" value="UniProtKB-SubCell"/>
</dbReference>
<dbReference type="GO" id="GO:0016990">
    <property type="term" value="F:arginine deiminase activity"/>
    <property type="evidence" value="ECO:0007669"/>
    <property type="project" value="UniProtKB-UniRule"/>
</dbReference>
<dbReference type="GO" id="GO:0019547">
    <property type="term" value="P:arginine catabolic process to ornithine"/>
    <property type="evidence" value="ECO:0007669"/>
    <property type="project" value="UniProtKB-UniRule"/>
</dbReference>
<dbReference type="GO" id="GO:0019546">
    <property type="term" value="P:arginine deiminase pathway"/>
    <property type="evidence" value="ECO:0007669"/>
    <property type="project" value="TreeGrafter"/>
</dbReference>
<dbReference type="Gene3D" id="1.10.3930.10">
    <property type="entry name" value="Arginine deiminase"/>
    <property type="match status" value="1"/>
</dbReference>
<dbReference type="Gene3D" id="3.75.10.10">
    <property type="entry name" value="L-arginine/glycine Amidinotransferase, Chain A"/>
    <property type="match status" value="1"/>
</dbReference>
<dbReference type="HAMAP" id="MF_00242">
    <property type="entry name" value="Arg_deiminase"/>
    <property type="match status" value="1"/>
</dbReference>
<dbReference type="InterPro" id="IPR003876">
    <property type="entry name" value="Arg_deiminase"/>
</dbReference>
<dbReference type="NCBIfam" id="TIGR01078">
    <property type="entry name" value="arcA"/>
    <property type="match status" value="1"/>
</dbReference>
<dbReference type="NCBIfam" id="NF002381">
    <property type="entry name" value="PRK01388.1"/>
    <property type="match status" value="1"/>
</dbReference>
<dbReference type="PANTHER" id="PTHR47271">
    <property type="entry name" value="ARGININE DEIMINASE"/>
    <property type="match status" value="1"/>
</dbReference>
<dbReference type="PANTHER" id="PTHR47271:SF2">
    <property type="entry name" value="ARGININE DEIMINASE"/>
    <property type="match status" value="1"/>
</dbReference>
<dbReference type="Pfam" id="PF02274">
    <property type="entry name" value="ADI"/>
    <property type="match status" value="1"/>
</dbReference>
<dbReference type="PIRSF" id="PIRSF006356">
    <property type="entry name" value="Arg_deiminase"/>
    <property type="match status" value="1"/>
</dbReference>
<dbReference type="PRINTS" id="PR01466">
    <property type="entry name" value="ARGDEIMINASE"/>
</dbReference>
<dbReference type="SUPFAM" id="SSF55909">
    <property type="entry name" value="Pentein"/>
    <property type="match status" value="1"/>
</dbReference>
<reference key="1">
    <citation type="journal article" date="2001" name="Proc. Natl. Acad. Sci. U.S.A.">
        <title>Complete genome sequence of an M1 strain of Streptococcus pyogenes.</title>
        <authorList>
            <person name="Ferretti J.J."/>
            <person name="McShan W.M."/>
            <person name="Ajdic D.J."/>
            <person name="Savic D.J."/>
            <person name="Savic G."/>
            <person name="Lyon K."/>
            <person name="Primeaux C."/>
            <person name="Sezate S."/>
            <person name="Suvorov A.N."/>
            <person name="Kenton S."/>
            <person name="Lai H.S."/>
            <person name="Lin S.P."/>
            <person name="Qian Y."/>
            <person name="Jia H.G."/>
            <person name="Najar F.Z."/>
            <person name="Ren Q."/>
            <person name="Zhu H."/>
            <person name="Song L."/>
            <person name="White J."/>
            <person name="Yuan X."/>
            <person name="Clifton S.W."/>
            <person name="Roe B.A."/>
            <person name="McLaughlin R.E."/>
        </authorList>
    </citation>
    <scope>NUCLEOTIDE SEQUENCE [LARGE SCALE GENOMIC DNA]</scope>
    <source>
        <strain>ATCC 700294 / SF370 / Serotype M1</strain>
    </source>
</reference>
<reference key="2">
    <citation type="journal article" date="2005" name="J. Infect. Dis.">
        <title>Evolutionary origin and emergence of a highly successful clone of serotype M1 group A Streptococcus involved multiple horizontal gene transfer events.</title>
        <authorList>
            <person name="Sumby P."/>
            <person name="Porcella S.F."/>
            <person name="Madrigal A.G."/>
            <person name="Barbian K.D."/>
            <person name="Virtaneva K."/>
            <person name="Ricklefs S.M."/>
            <person name="Sturdevant D.E."/>
            <person name="Graham M.R."/>
            <person name="Vuopio-Varkila J."/>
            <person name="Hoe N.P."/>
            <person name="Musser J.M."/>
        </authorList>
    </citation>
    <scope>NUCLEOTIDE SEQUENCE [LARGE SCALE GENOMIC DNA]</scope>
    <source>
        <strain>ATCC BAA-947 / MGAS5005 / Serotype M1</strain>
    </source>
</reference>
<name>ARCA_STRP1</name>
<proteinExistence type="inferred from homology"/>
<gene>
    <name type="primary">arcA</name>
    <name type="synonym">sagP</name>
    <name type="ordered locus">SPy_1547</name>
    <name type="ordered locus">M5005_Spy1275</name>
</gene>